<name>OMPA_THEMA</name>
<gene>
    <name type="primary">omp-alpha</name>
    <name type="ordered locus">TM_0477</name>
</gene>
<organism>
    <name type="scientific">Thermotoga maritima (strain ATCC 43589 / DSM 3109 / JCM 10099 / NBRC 100826 / MSB8)</name>
    <dbReference type="NCBI Taxonomy" id="243274"/>
    <lineage>
        <taxon>Bacteria</taxon>
        <taxon>Thermotogati</taxon>
        <taxon>Thermotogota</taxon>
        <taxon>Thermotogae</taxon>
        <taxon>Thermotogales</taxon>
        <taxon>Thermotogaceae</taxon>
        <taxon>Thermotoga</taxon>
    </lineage>
</organism>
<reference key="1">
    <citation type="journal article" date="1992" name="EMBO J.">
        <title>Isolation and cloning of Omp alpha, a coiled-coil protein spanning the periplasmic space of the ancestral eubacterium Thermotoga maritima.</title>
        <authorList>
            <person name="Engel A.M."/>
            <person name="Cejka Z."/>
            <person name="Lupas A."/>
            <person name="Lottspeich F."/>
            <person name="Baumeister W."/>
        </authorList>
    </citation>
    <scope>NUCLEOTIDE SEQUENCE [GENOMIC DNA]</scope>
    <scope>PARTIAL PROTEIN SEQUENCE</scope>
    <source>
        <strain>ATCC 43589 / DSM 3109 / JCM 10099 / NBRC 100826 / MSB8</strain>
    </source>
</reference>
<reference key="2">
    <citation type="journal article" date="1999" name="Nature">
        <title>Evidence for lateral gene transfer between Archaea and Bacteria from genome sequence of Thermotoga maritima.</title>
        <authorList>
            <person name="Nelson K.E."/>
            <person name="Clayton R.A."/>
            <person name="Gill S.R."/>
            <person name="Gwinn M.L."/>
            <person name="Dodson R.J."/>
            <person name="Haft D.H."/>
            <person name="Hickey E.K."/>
            <person name="Peterson J.D."/>
            <person name="Nelson W.C."/>
            <person name="Ketchum K.A."/>
            <person name="McDonald L.A."/>
            <person name="Utterback T.R."/>
            <person name="Malek J.A."/>
            <person name="Linher K.D."/>
            <person name="Garrett M.M."/>
            <person name="Stewart A.M."/>
            <person name="Cotton M.D."/>
            <person name="Pratt M.S."/>
            <person name="Phillips C.A."/>
            <person name="Richardson D.L."/>
            <person name="Heidelberg J.F."/>
            <person name="Sutton G.G."/>
            <person name="Fleischmann R.D."/>
            <person name="Eisen J.A."/>
            <person name="White O."/>
            <person name="Salzberg S.L."/>
            <person name="Smith H.O."/>
            <person name="Venter J.C."/>
            <person name="Fraser C.M."/>
        </authorList>
    </citation>
    <scope>NUCLEOTIDE SEQUENCE [LARGE SCALE GENOMIC DNA]</scope>
    <source>
        <strain>ATCC 43589 / DSM 3109 / JCM 10099 / NBRC 100826 / MSB8</strain>
    </source>
</reference>
<accession>Q01969</accession>
<sequence>MKRVLLTVAMLSVFFSAMFAFFPDVPKDHWAYEYVWKLWQRGIFIGYPDGEFKGDRYITRYEAATAVSRLLDFIEQKMLAGASGDLAQVVGNLSDKYMALEEKVNGLTGILDTLASQIGTTQANLTETERELLEKIDAVKEEIEMEFDKEISLNREVVNNIGLKLGNLSRDYERYKENVDAKISEVNEKLAALEKDLGNKIADLEGIVNLHEKDIINIYNKISSVNEELNNKIAATEEKLSRKDEEISAMVELHEKDIINLYNKVAALNEDLNKKILDTKAELSAKIESQEKTLNMVYTKLLDTESKLNDEISALKEKDAEIQKTVDLHEQDIVNLYGKTSSLEEDLNMKYNETNEKIDQVKAELEDKIESVKAYNRNLSILTGAFFGILGLILIAISGK</sequence>
<keyword id="KW-0998">Cell outer membrane</keyword>
<keyword id="KW-0175">Coiled coil</keyword>
<keyword id="KW-0903">Direct protein sequencing</keyword>
<keyword id="KW-0472">Membrane</keyword>
<keyword id="KW-1185">Reference proteome</keyword>
<keyword id="KW-0677">Repeat</keyword>
<keyword id="KW-0732">Signal</keyword>
<keyword id="KW-0812">Transmembrane</keyword>
<keyword id="KW-1133">Transmembrane helix</keyword>
<evidence type="ECO:0000255" key="1"/>
<evidence type="ECO:0000255" key="2">
    <source>
        <dbReference type="PROSITE-ProRule" id="PRU00777"/>
    </source>
</evidence>
<evidence type="ECO:0000305" key="3"/>
<protein>
    <recommendedName>
        <fullName>Outer membrane protein alpha</fullName>
    </recommendedName>
</protein>
<dbReference type="EMBL" id="X68276">
    <property type="protein sequence ID" value="CAA48337.1"/>
    <property type="molecule type" value="Genomic_DNA"/>
</dbReference>
<dbReference type="EMBL" id="AE000512">
    <property type="protein sequence ID" value="AAD35562.1"/>
    <property type="molecule type" value="Genomic_DNA"/>
</dbReference>
<dbReference type="PIR" id="E72372">
    <property type="entry name" value="E72372"/>
</dbReference>
<dbReference type="RefSeq" id="NP_228287.1">
    <property type="nucleotide sequence ID" value="NC_000853.1"/>
</dbReference>
<dbReference type="RefSeq" id="WP_004081489.1">
    <property type="nucleotide sequence ID" value="NC_000853.1"/>
</dbReference>
<dbReference type="SMR" id="Q01969"/>
<dbReference type="STRING" id="243274.TM_0477"/>
<dbReference type="PaxDb" id="243274-THEMA_02300"/>
<dbReference type="EnsemblBacteria" id="AAD35562">
    <property type="protein sequence ID" value="AAD35562"/>
    <property type="gene ID" value="TM_0477"/>
</dbReference>
<dbReference type="KEGG" id="tma:TM0477"/>
<dbReference type="KEGG" id="tmi:THEMA_02300"/>
<dbReference type="KEGG" id="tmm:Tmari_0474"/>
<dbReference type="KEGG" id="tmw:THMA_0487"/>
<dbReference type="eggNOG" id="COG1196">
    <property type="taxonomic scope" value="Bacteria"/>
</dbReference>
<dbReference type="InParanoid" id="Q01969"/>
<dbReference type="OrthoDB" id="41570at2"/>
<dbReference type="Proteomes" id="UP000008183">
    <property type="component" value="Chromosome"/>
</dbReference>
<dbReference type="GO" id="GO:0009279">
    <property type="term" value="C:cell outer membrane"/>
    <property type="evidence" value="ECO:0007669"/>
    <property type="project" value="UniProtKB-SubCell"/>
</dbReference>
<dbReference type="Gene3D" id="1.10.287.1490">
    <property type="match status" value="1"/>
</dbReference>
<dbReference type="InterPro" id="IPR051465">
    <property type="entry name" value="Cell_Envelope_Struct_Comp"/>
</dbReference>
<dbReference type="InterPro" id="IPR001119">
    <property type="entry name" value="SLH_dom"/>
</dbReference>
<dbReference type="PANTHER" id="PTHR43308:SF1">
    <property type="entry name" value="OUTER MEMBRANE PROTEIN ALPHA"/>
    <property type="match status" value="1"/>
</dbReference>
<dbReference type="PANTHER" id="PTHR43308">
    <property type="entry name" value="OUTER MEMBRANE PROTEIN ALPHA-RELATED"/>
    <property type="match status" value="1"/>
</dbReference>
<dbReference type="Pfam" id="PF00395">
    <property type="entry name" value="SLH"/>
    <property type="match status" value="1"/>
</dbReference>
<dbReference type="PROSITE" id="PS51272">
    <property type="entry name" value="SLH"/>
    <property type="match status" value="1"/>
</dbReference>
<proteinExistence type="evidence at protein level"/>
<comment type="function">
    <text>Links the outer membrane to the inner membrane. Long fibrous protein that could serve to separate the two membranes.</text>
</comment>
<comment type="subunit">
    <text>Homotetramer.</text>
</comment>
<comment type="subcellular location">
    <subcellularLocation>
        <location>Cell outer membrane</location>
    </subcellularLocation>
</comment>
<feature type="signal peptide">
    <location>
        <begin position="1"/>
        <end position="20"/>
    </location>
</feature>
<feature type="chain" id="PRO_0000032645" description="Outer membrane protein alpha">
    <location>
        <begin position="21"/>
        <end position="400"/>
    </location>
</feature>
<feature type="transmembrane region" description="Helical" evidence="1">
    <location>
        <begin position="380"/>
        <end position="400"/>
    </location>
</feature>
<feature type="domain" description="SLH" evidence="2">
    <location>
        <begin position="21"/>
        <end position="81"/>
    </location>
</feature>
<feature type="repeat" description="1">
    <location>
        <begin position="208"/>
        <end position="232"/>
    </location>
</feature>
<feature type="repeat" description="2">
    <location>
        <begin position="251"/>
        <end position="275"/>
    </location>
</feature>
<feature type="repeat" description="3">
    <location>
        <begin position="326"/>
        <end position="350"/>
    </location>
</feature>
<feature type="region of interest" description="3 X 25 AA approximate repeat">
    <location>
        <begin position="208"/>
        <end position="350"/>
    </location>
</feature>
<feature type="coiled-coil region" evidence="1">
    <location>
        <begin position="85"/>
        <end position="379"/>
    </location>
</feature>
<feature type="sequence conflict" description="In Ref. 1; CAA48337." evidence="3" ref="1">
    <original>V</original>
    <variation>A</variation>
    <location>
        <position position="179"/>
    </location>
</feature>